<dbReference type="EC" id="4.1.1.49" evidence="1"/>
<dbReference type="EMBL" id="CP000083">
    <property type="protein sequence ID" value="AAZ28633.1"/>
    <property type="molecule type" value="Genomic_DNA"/>
</dbReference>
<dbReference type="RefSeq" id="WP_011045323.1">
    <property type="nucleotide sequence ID" value="NC_003910.7"/>
</dbReference>
<dbReference type="SMR" id="Q47VD0"/>
<dbReference type="STRING" id="167879.CPS_4595"/>
<dbReference type="KEGG" id="cps:CPS_4595"/>
<dbReference type="eggNOG" id="COG1866">
    <property type="taxonomic scope" value="Bacteria"/>
</dbReference>
<dbReference type="HOGENOM" id="CLU_018247_0_1_6"/>
<dbReference type="UniPathway" id="UPA00138"/>
<dbReference type="Proteomes" id="UP000000547">
    <property type="component" value="Chromosome"/>
</dbReference>
<dbReference type="GO" id="GO:0005829">
    <property type="term" value="C:cytosol"/>
    <property type="evidence" value="ECO:0007669"/>
    <property type="project" value="TreeGrafter"/>
</dbReference>
<dbReference type="GO" id="GO:0005524">
    <property type="term" value="F:ATP binding"/>
    <property type="evidence" value="ECO:0007669"/>
    <property type="project" value="UniProtKB-UniRule"/>
</dbReference>
<dbReference type="GO" id="GO:0046872">
    <property type="term" value="F:metal ion binding"/>
    <property type="evidence" value="ECO:0007669"/>
    <property type="project" value="UniProtKB-KW"/>
</dbReference>
<dbReference type="GO" id="GO:0004612">
    <property type="term" value="F:phosphoenolpyruvate carboxykinase (ATP) activity"/>
    <property type="evidence" value="ECO:0007669"/>
    <property type="project" value="UniProtKB-UniRule"/>
</dbReference>
<dbReference type="GO" id="GO:0006094">
    <property type="term" value="P:gluconeogenesis"/>
    <property type="evidence" value="ECO:0007669"/>
    <property type="project" value="UniProtKB-UniRule"/>
</dbReference>
<dbReference type="CDD" id="cd00484">
    <property type="entry name" value="PEPCK_ATP"/>
    <property type="match status" value="1"/>
</dbReference>
<dbReference type="FunFam" id="2.170.8.10:FF:000001">
    <property type="entry name" value="Phosphoenolpyruvate carboxykinase (ATP)"/>
    <property type="match status" value="1"/>
</dbReference>
<dbReference type="FunFam" id="3.40.449.10:FF:000001">
    <property type="entry name" value="Phosphoenolpyruvate carboxykinase (ATP)"/>
    <property type="match status" value="1"/>
</dbReference>
<dbReference type="Gene3D" id="3.90.228.20">
    <property type="match status" value="1"/>
</dbReference>
<dbReference type="Gene3D" id="3.40.449.10">
    <property type="entry name" value="Phosphoenolpyruvate Carboxykinase, domain 1"/>
    <property type="match status" value="1"/>
</dbReference>
<dbReference type="Gene3D" id="2.170.8.10">
    <property type="entry name" value="Phosphoenolpyruvate Carboxykinase, domain 2"/>
    <property type="match status" value="1"/>
</dbReference>
<dbReference type="HAMAP" id="MF_00453">
    <property type="entry name" value="PEPCK_ATP"/>
    <property type="match status" value="1"/>
</dbReference>
<dbReference type="InterPro" id="IPR001272">
    <property type="entry name" value="PEP_carboxykinase_ATP"/>
</dbReference>
<dbReference type="InterPro" id="IPR013035">
    <property type="entry name" value="PEP_carboxykinase_C"/>
</dbReference>
<dbReference type="InterPro" id="IPR008210">
    <property type="entry name" value="PEP_carboxykinase_N"/>
</dbReference>
<dbReference type="InterPro" id="IPR015994">
    <property type="entry name" value="PEPCK_ATP_CS"/>
</dbReference>
<dbReference type="NCBIfam" id="TIGR00224">
    <property type="entry name" value="pckA"/>
    <property type="match status" value="1"/>
</dbReference>
<dbReference type="NCBIfam" id="NF006819">
    <property type="entry name" value="PRK09344.1-1"/>
    <property type="match status" value="1"/>
</dbReference>
<dbReference type="NCBIfam" id="NF006820">
    <property type="entry name" value="PRK09344.1-2"/>
    <property type="match status" value="1"/>
</dbReference>
<dbReference type="NCBIfam" id="NF006821">
    <property type="entry name" value="PRK09344.1-3"/>
    <property type="match status" value="1"/>
</dbReference>
<dbReference type="PANTHER" id="PTHR30031:SF0">
    <property type="entry name" value="PHOSPHOENOLPYRUVATE CARBOXYKINASE (ATP)"/>
    <property type="match status" value="1"/>
</dbReference>
<dbReference type="PANTHER" id="PTHR30031">
    <property type="entry name" value="PHOSPHOENOLPYRUVATE CARBOXYKINASE ATP"/>
    <property type="match status" value="1"/>
</dbReference>
<dbReference type="Pfam" id="PF01293">
    <property type="entry name" value="PEPCK_ATP"/>
    <property type="match status" value="1"/>
</dbReference>
<dbReference type="PIRSF" id="PIRSF006294">
    <property type="entry name" value="PEP_crbxkin"/>
    <property type="match status" value="1"/>
</dbReference>
<dbReference type="SUPFAM" id="SSF68923">
    <property type="entry name" value="PEP carboxykinase N-terminal domain"/>
    <property type="match status" value="1"/>
</dbReference>
<dbReference type="SUPFAM" id="SSF53795">
    <property type="entry name" value="PEP carboxykinase-like"/>
    <property type="match status" value="1"/>
</dbReference>
<dbReference type="PROSITE" id="PS00532">
    <property type="entry name" value="PEPCK_ATP"/>
    <property type="match status" value="1"/>
</dbReference>
<comment type="function">
    <text evidence="1">Involved in the gluconeogenesis. Catalyzes the conversion of oxaloacetate (OAA) to phosphoenolpyruvate (PEP) through direct phosphoryl transfer between the nucleoside triphosphate and OAA.</text>
</comment>
<comment type="catalytic activity">
    <reaction evidence="1">
        <text>oxaloacetate + ATP = phosphoenolpyruvate + ADP + CO2</text>
        <dbReference type="Rhea" id="RHEA:18617"/>
        <dbReference type="ChEBI" id="CHEBI:16452"/>
        <dbReference type="ChEBI" id="CHEBI:16526"/>
        <dbReference type="ChEBI" id="CHEBI:30616"/>
        <dbReference type="ChEBI" id="CHEBI:58702"/>
        <dbReference type="ChEBI" id="CHEBI:456216"/>
        <dbReference type="EC" id="4.1.1.49"/>
    </reaction>
</comment>
<comment type="cofactor">
    <cofactor evidence="1">
        <name>Mn(2+)</name>
        <dbReference type="ChEBI" id="CHEBI:29035"/>
    </cofactor>
    <text evidence="1">Binds 1 Mn(2+) ion per subunit.</text>
</comment>
<comment type="pathway">
    <text evidence="1">Carbohydrate biosynthesis; gluconeogenesis.</text>
</comment>
<comment type="subunit">
    <text evidence="1">Monomer.</text>
</comment>
<comment type="subcellular location">
    <subcellularLocation>
        <location evidence="1">Cytoplasm</location>
    </subcellularLocation>
</comment>
<comment type="similarity">
    <text evidence="1">Belongs to the phosphoenolpyruvate carboxykinase (ATP) family.</text>
</comment>
<feature type="chain" id="PRO_0000236922" description="Phosphoenolpyruvate carboxykinase (ATP)">
    <location>
        <begin position="1"/>
        <end position="536"/>
    </location>
</feature>
<feature type="binding site" evidence="1">
    <location>
        <position position="63"/>
    </location>
    <ligand>
        <name>substrate</name>
    </ligand>
</feature>
<feature type="binding site" evidence="1">
    <location>
        <position position="203"/>
    </location>
    <ligand>
        <name>substrate</name>
    </ligand>
</feature>
<feature type="binding site" evidence="1">
    <location>
        <position position="209"/>
    </location>
    <ligand>
        <name>ATP</name>
        <dbReference type="ChEBI" id="CHEBI:30616"/>
    </ligand>
</feature>
<feature type="binding site" evidence="1">
    <location>
        <position position="209"/>
    </location>
    <ligand>
        <name>Mn(2+)</name>
        <dbReference type="ChEBI" id="CHEBI:29035"/>
    </ligand>
</feature>
<feature type="binding site" evidence="1">
    <location>
        <position position="209"/>
    </location>
    <ligand>
        <name>substrate</name>
    </ligand>
</feature>
<feature type="binding site" evidence="1">
    <location>
        <position position="228"/>
    </location>
    <ligand>
        <name>ATP</name>
        <dbReference type="ChEBI" id="CHEBI:30616"/>
    </ligand>
</feature>
<feature type="binding site" evidence="1">
    <location>
        <position position="228"/>
    </location>
    <ligand>
        <name>Mn(2+)</name>
        <dbReference type="ChEBI" id="CHEBI:29035"/>
    </ligand>
</feature>
<feature type="binding site" evidence="1">
    <location>
        <begin position="244"/>
        <end position="252"/>
    </location>
    <ligand>
        <name>ATP</name>
        <dbReference type="ChEBI" id="CHEBI:30616"/>
    </ligand>
</feature>
<feature type="binding site" evidence="1">
    <location>
        <position position="265"/>
    </location>
    <ligand>
        <name>Mn(2+)</name>
        <dbReference type="ChEBI" id="CHEBI:29035"/>
    </ligand>
</feature>
<feature type="binding site" evidence="1">
    <location>
        <position position="293"/>
    </location>
    <ligand>
        <name>ATP</name>
        <dbReference type="ChEBI" id="CHEBI:30616"/>
    </ligand>
</feature>
<feature type="binding site" evidence="1">
    <location>
        <position position="329"/>
    </location>
    <ligand>
        <name>ATP</name>
        <dbReference type="ChEBI" id="CHEBI:30616"/>
    </ligand>
</feature>
<feature type="binding site" evidence="1">
    <location>
        <position position="329"/>
    </location>
    <ligand>
        <name>substrate</name>
    </ligand>
</feature>
<feature type="binding site" evidence="1">
    <location>
        <begin position="445"/>
        <end position="446"/>
    </location>
    <ligand>
        <name>ATP</name>
        <dbReference type="ChEBI" id="CHEBI:30616"/>
    </ligand>
</feature>
<feature type="binding site" evidence="1">
    <location>
        <position position="451"/>
    </location>
    <ligand>
        <name>ATP</name>
        <dbReference type="ChEBI" id="CHEBI:30616"/>
    </ligand>
</feature>
<accession>Q47VD0</accession>
<evidence type="ECO:0000255" key="1">
    <source>
        <dbReference type="HAMAP-Rule" id="MF_00453"/>
    </source>
</evidence>
<keyword id="KW-0067">ATP-binding</keyword>
<keyword id="KW-0963">Cytoplasm</keyword>
<keyword id="KW-0210">Decarboxylase</keyword>
<keyword id="KW-0312">Gluconeogenesis</keyword>
<keyword id="KW-0456">Lyase</keyword>
<keyword id="KW-0464">Manganese</keyword>
<keyword id="KW-0479">Metal-binding</keyword>
<keyword id="KW-0547">Nucleotide-binding</keyword>
<protein>
    <recommendedName>
        <fullName evidence="1">Phosphoenolpyruvate carboxykinase (ATP)</fullName>
        <shortName evidence="1">PCK</shortName>
        <shortName evidence="1">PEP carboxykinase</shortName>
        <shortName evidence="1">PEPCK</shortName>
        <ecNumber evidence="1">4.1.1.49</ecNumber>
    </recommendedName>
</protein>
<organism>
    <name type="scientific">Colwellia psychrerythraea (strain 34H / ATCC BAA-681)</name>
    <name type="common">Vibrio psychroerythus</name>
    <dbReference type="NCBI Taxonomy" id="167879"/>
    <lineage>
        <taxon>Bacteria</taxon>
        <taxon>Pseudomonadati</taxon>
        <taxon>Pseudomonadota</taxon>
        <taxon>Gammaproteobacteria</taxon>
        <taxon>Alteromonadales</taxon>
        <taxon>Colwelliaceae</taxon>
        <taxon>Colwellia</taxon>
    </lineage>
</organism>
<reference key="1">
    <citation type="journal article" date="2005" name="Proc. Natl. Acad. Sci. U.S.A.">
        <title>The psychrophilic lifestyle as revealed by the genome sequence of Colwellia psychrerythraea 34H through genomic and proteomic analyses.</title>
        <authorList>
            <person name="Methe B.A."/>
            <person name="Nelson K.E."/>
            <person name="Deming J.W."/>
            <person name="Momen B."/>
            <person name="Melamud E."/>
            <person name="Zhang X."/>
            <person name="Moult J."/>
            <person name="Madupu R."/>
            <person name="Nelson W.C."/>
            <person name="Dodson R.J."/>
            <person name="Brinkac L.M."/>
            <person name="Daugherty S.C."/>
            <person name="Durkin A.S."/>
            <person name="DeBoy R.T."/>
            <person name="Kolonay J.F."/>
            <person name="Sullivan S.A."/>
            <person name="Zhou L."/>
            <person name="Davidsen T.M."/>
            <person name="Wu M."/>
            <person name="Huston A.L."/>
            <person name="Lewis M."/>
            <person name="Weaver B."/>
            <person name="Weidman J.F."/>
            <person name="Khouri H."/>
            <person name="Utterback T.R."/>
            <person name="Feldblyum T.V."/>
            <person name="Fraser C.M."/>
        </authorList>
    </citation>
    <scope>NUCLEOTIDE SEQUENCE [LARGE SCALE GENOMIC DNA]</scope>
    <source>
        <strain>34H / ATCC BAA-681</strain>
    </source>
</reference>
<sequence>MTAPKNSIDLSQYGIDDVNEVVYNPSYELLFSEETKAGLEGFDKGIVTELGAVNVDTGIFTGRSPKDKYIVRDDVTRDTVWWSDQGKNDNKAMTPETWDHLKGLVTTQLSGQRLFVVDTFCGADEATRLKVRFITQVAWQAHFVKNMFIRPTDAELENYEPDFVVMNGAKTVNDKWEEQGLNSENFVAFNLTEKIQLIGGTWYGGEMKKGMFSMMNYYLPLQGIASMHCSANVGEDGDTAIFFGLSGTGKTTLSTDPKRQLIGDDEHGWDDNGVFNFEGGCYAKTINLSKENEPDIYNAIRRDALLENVTVDANGKIDFDDNSKTENTRVSYPIHHIDNIVKPVSRAGHAKKVIFLTADAFGVLPPVAKLTPEQTEYYFLSGFTAKLAGTERGITEPTPTFSSCFGAAFLSLHPTQYAEVLHKRMDDAGAEAYLVNTGWNGTGKRISIKATRAIIDAILDGSIDNAETETVPFFNLEVPKVIAGVEGDILDPRNTYEDPSVWNDKAVDLAKRFVNNFDKFTDTDNGKALVAAGPQL</sequence>
<name>PCKA_COLP3</name>
<proteinExistence type="inferred from homology"/>
<gene>
    <name evidence="1" type="primary">pckA</name>
    <name type="ordered locus">CPS_4595</name>
</gene>